<keyword id="KW-0963">Cytoplasm</keyword>
<keyword id="KW-0238">DNA-binding</keyword>
<keyword id="KW-0678">Repressor</keyword>
<keyword id="KW-0804">Transcription</keyword>
<keyword id="KW-0805">Transcription regulation</keyword>
<comment type="function">
    <text evidence="1">Repressor of rcnA expression. Acts by binding specifically to the rcnA promoter in the absence of nickel and cobalt. In the presence of one of these metals, it has a weaker affinity for rcnA promoter (By similarity).</text>
</comment>
<comment type="subcellular location">
    <subcellularLocation>
        <location evidence="2">Cytoplasm</location>
    </subcellularLocation>
</comment>
<comment type="similarity">
    <text evidence="2">Belongs to the FrmR/RcnR family.</text>
</comment>
<dbReference type="EMBL" id="CP000243">
    <property type="protein sequence ID" value="ABE07847.1"/>
    <property type="molecule type" value="Genomic_DNA"/>
</dbReference>
<dbReference type="RefSeq" id="WP_000019944.1">
    <property type="nucleotide sequence ID" value="NZ_CP064825.1"/>
</dbReference>
<dbReference type="SMR" id="Q1R9W7"/>
<dbReference type="GeneID" id="93775089"/>
<dbReference type="KEGG" id="eci:UTI89_C2379"/>
<dbReference type="HOGENOM" id="CLU_130332_3_0_6"/>
<dbReference type="Proteomes" id="UP000001952">
    <property type="component" value="Chromosome"/>
</dbReference>
<dbReference type="GO" id="GO:0005737">
    <property type="term" value="C:cytoplasm"/>
    <property type="evidence" value="ECO:0007669"/>
    <property type="project" value="UniProtKB-SubCell"/>
</dbReference>
<dbReference type="GO" id="GO:0003677">
    <property type="term" value="F:DNA binding"/>
    <property type="evidence" value="ECO:0007669"/>
    <property type="project" value="UniProtKB-KW"/>
</dbReference>
<dbReference type="GO" id="GO:0046872">
    <property type="term" value="F:metal ion binding"/>
    <property type="evidence" value="ECO:0007669"/>
    <property type="project" value="InterPro"/>
</dbReference>
<dbReference type="GO" id="GO:0045892">
    <property type="term" value="P:negative regulation of DNA-templated transcription"/>
    <property type="evidence" value="ECO:0007669"/>
    <property type="project" value="UniProtKB-ARBA"/>
</dbReference>
<dbReference type="CDD" id="cd10153">
    <property type="entry name" value="RcnR-FrmR-like_DUF156"/>
    <property type="match status" value="1"/>
</dbReference>
<dbReference type="FunFam" id="1.20.58.1000:FF:000001">
    <property type="entry name" value="Transcriptional repressor RcnR"/>
    <property type="match status" value="1"/>
</dbReference>
<dbReference type="Gene3D" id="1.20.58.1000">
    <property type="entry name" value="Metal-sensitive repressor, helix protomer"/>
    <property type="match status" value="1"/>
</dbReference>
<dbReference type="InterPro" id="IPR003735">
    <property type="entry name" value="Metal_Tscrpt_repr"/>
</dbReference>
<dbReference type="InterPro" id="IPR038390">
    <property type="entry name" value="Metal_Tscrpt_repr_sf"/>
</dbReference>
<dbReference type="NCBIfam" id="NF011613">
    <property type="entry name" value="PRK15039.1"/>
    <property type="match status" value="1"/>
</dbReference>
<dbReference type="PANTHER" id="PTHR33677">
    <property type="entry name" value="TRANSCRIPTIONAL REPRESSOR FRMR-RELATED"/>
    <property type="match status" value="1"/>
</dbReference>
<dbReference type="PANTHER" id="PTHR33677:SF1">
    <property type="entry name" value="TRANSCRIPTIONAL REPRESSOR RCNR"/>
    <property type="match status" value="1"/>
</dbReference>
<dbReference type="Pfam" id="PF02583">
    <property type="entry name" value="Trns_repr_metal"/>
    <property type="match status" value="1"/>
</dbReference>
<organism>
    <name type="scientific">Escherichia coli (strain UTI89 / UPEC)</name>
    <dbReference type="NCBI Taxonomy" id="364106"/>
    <lineage>
        <taxon>Bacteria</taxon>
        <taxon>Pseudomonadati</taxon>
        <taxon>Pseudomonadota</taxon>
        <taxon>Gammaproteobacteria</taxon>
        <taxon>Enterobacterales</taxon>
        <taxon>Enterobacteriaceae</taxon>
        <taxon>Escherichia</taxon>
    </lineage>
</organism>
<evidence type="ECO:0000250" key="1"/>
<evidence type="ECO:0000305" key="2"/>
<sequence length="90" mass="10134">MSHTIRDKQKLKARASKIQGQVVALKKMLDEPHECAAVLQQIAAIRGAVNGLMREVIKGHLTEHIVHQGDELKREEDLDVVLKVLDSYIK</sequence>
<accession>Q1R9W7</accession>
<reference key="1">
    <citation type="journal article" date="2006" name="Proc. Natl. Acad. Sci. U.S.A.">
        <title>Identification of genes subject to positive selection in uropathogenic strains of Escherichia coli: a comparative genomics approach.</title>
        <authorList>
            <person name="Chen S.L."/>
            <person name="Hung C.-S."/>
            <person name="Xu J."/>
            <person name="Reigstad C.S."/>
            <person name="Magrini V."/>
            <person name="Sabo A."/>
            <person name="Blasiar D."/>
            <person name="Bieri T."/>
            <person name="Meyer R.R."/>
            <person name="Ozersky P."/>
            <person name="Armstrong J.R."/>
            <person name="Fulton R.S."/>
            <person name="Latreille J.P."/>
            <person name="Spieth J."/>
            <person name="Hooton T.M."/>
            <person name="Mardis E.R."/>
            <person name="Hultgren S.J."/>
            <person name="Gordon J.I."/>
        </authorList>
    </citation>
    <scope>NUCLEOTIDE SEQUENCE [LARGE SCALE GENOMIC DNA]</scope>
    <source>
        <strain>UTI89 / UPEC</strain>
    </source>
</reference>
<feature type="chain" id="PRO_0000332693" description="Transcriptional repressor RcnR">
    <location>
        <begin position="1"/>
        <end position="90"/>
    </location>
</feature>
<gene>
    <name type="primary">rcnR</name>
    <name type="ordered locus">UTI89_C2379</name>
</gene>
<proteinExistence type="inferred from homology"/>
<protein>
    <recommendedName>
        <fullName>Transcriptional repressor RcnR</fullName>
    </recommendedName>
</protein>
<name>RCNR_ECOUT</name>